<feature type="chain" id="PRO_0000115362" description="Uncharacterized protein UL127">
    <location>
        <begin position="1"/>
        <end position="131"/>
    </location>
</feature>
<sequence length="131" mass="15248">MCQLDVASIGDIASYRLSPISKLRYLRHTESPKSPKSSIAIPRKRYKRYRQISRMPKNHFWKNGDISYTETHIGDIFNMPYFQISIFPISPSLSAINTTIARHEFSRRQKSQNAYFGQTHILLFTAAYSPF</sequence>
<reference key="1">
    <citation type="journal article" date="1990" name="Curr. Top. Microbiol. Immunol.">
        <title>Analysis of the protein-coding content of the sequence of human cytomegalovirus strain AD169.</title>
        <authorList>
            <person name="Chee M.S."/>
            <person name="Bankier A.T."/>
            <person name="Beck S."/>
            <person name="Bohni R."/>
            <person name="Brown C.M."/>
            <person name="Cerny R."/>
            <person name="Horsnell T."/>
            <person name="Hutchison C.A. III"/>
            <person name="Kouzarides T."/>
            <person name="Martignetti J.A."/>
            <person name="Preddie E."/>
            <person name="Satchwell S.C."/>
            <person name="Tomlinson P."/>
            <person name="Weston K.M."/>
            <person name="Barrell B.G."/>
        </authorList>
    </citation>
    <scope>NUCLEOTIDE SEQUENCE [LARGE SCALE GENOMIC DNA]</scope>
</reference>
<name>UL127_HCMVA</name>
<protein>
    <recommendedName>
        <fullName>Uncharacterized protein UL127</fullName>
    </recommendedName>
</protein>
<gene>
    <name type="primary">UL127</name>
</gene>
<organismHost>
    <name type="scientific">Homo sapiens</name>
    <name type="common">Human</name>
    <dbReference type="NCBI Taxonomy" id="9606"/>
</organismHost>
<accession>P16771</accession>
<proteinExistence type="predicted"/>
<dbReference type="EMBL" id="X17403">
    <property type="protein sequence ID" value="CAA35329.1"/>
    <property type="molecule type" value="Genomic_DNA"/>
</dbReference>
<dbReference type="PIR" id="S09893">
    <property type="entry name" value="S09893"/>
</dbReference>
<dbReference type="SMR" id="P16771"/>
<dbReference type="Proteomes" id="UP000008991">
    <property type="component" value="Segment"/>
</dbReference>
<organism>
    <name type="scientific">Human cytomegalovirus (strain AD169)</name>
    <name type="common">HHV-5</name>
    <name type="synonym">Human herpesvirus 5</name>
    <dbReference type="NCBI Taxonomy" id="10360"/>
    <lineage>
        <taxon>Viruses</taxon>
        <taxon>Duplodnaviria</taxon>
        <taxon>Heunggongvirae</taxon>
        <taxon>Peploviricota</taxon>
        <taxon>Herviviricetes</taxon>
        <taxon>Herpesvirales</taxon>
        <taxon>Orthoherpesviridae</taxon>
        <taxon>Betaherpesvirinae</taxon>
        <taxon>Cytomegalovirus</taxon>
        <taxon>Cytomegalovirus humanbeta5</taxon>
        <taxon>Human cytomegalovirus</taxon>
    </lineage>
</organism>